<reference key="1">
    <citation type="submission" date="2007-06" db="EMBL/GenBank/DDBJ databases">
        <authorList>
            <person name="Dodson R.J."/>
            <person name="Harkins D."/>
            <person name="Paulsen I.T."/>
        </authorList>
    </citation>
    <scope>NUCLEOTIDE SEQUENCE [LARGE SCALE GENOMIC DNA]</scope>
    <source>
        <strain>DSM 24068 / PA7</strain>
    </source>
</reference>
<sequence length="426" mass="46992">MTDTRNGEDNGKLLYCSFCGKSQHEVRKLIAGPSVFICDECVDLCNDIIREEVQEAQAESSGHKLPAPKEIRTILDQYVIGQERAKKVLAVAVYNHYKRLNQRDKKDDIELGKSNILMIGPTGSGKTLLAETLARLLNVPFTIADATTLTEAGYVGEDVENIIQKLLQKCDYDVEKAQMGIVYIDEIDKISRKSDNPSITRDVSGEGVQQALLKLIEGTVASVPPQGGRKHPQQEFLQVDTRNILFICGGAFAGLERVIQNRSARGGIGFNAEVRSQEMGKKVGEAFKEVEPEDLVKFGLIPEFVGRLPVIATLDELDEAALMQILTEPKNALTKQYAKLFEMEGVDLEFRPDALKAVARKALERKTGARGLRSILEGILLDTMYEIPSQQDVSKVVIDESVIDGSSQPLMIYENSEKPAKAAPEA</sequence>
<gene>
    <name evidence="1" type="primary">clpX</name>
    <name type="ordered locus">PSPA7_3495</name>
</gene>
<proteinExistence type="inferred from homology"/>
<comment type="function">
    <text evidence="1">ATP-dependent specificity component of the Clp protease. It directs the protease to specific substrates. Can perform chaperone functions in the absence of ClpP.</text>
</comment>
<comment type="subunit">
    <text evidence="1">Component of the ClpX-ClpP complex. Forms a hexameric ring that, in the presence of ATP, binds to fourteen ClpP subunits assembled into a disk-like structure with a central cavity, resembling the structure of eukaryotic proteasomes.</text>
</comment>
<comment type="similarity">
    <text evidence="1">Belongs to the ClpX chaperone family.</text>
</comment>
<accession>A6V718</accession>
<feature type="chain" id="PRO_1000024621" description="ATP-dependent Clp protease ATP-binding subunit ClpX">
    <location>
        <begin position="1"/>
        <end position="426"/>
    </location>
</feature>
<feature type="domain" description="ClpX-type ZB" evidence="2">
    <location>
        <begin position="4"/>
        <end position="57"/>
    </location>
</feature>
<feature type="binding site" evidence="2">
    <location>
        <position position="16"/>
    </location>
    <ligand>
        <name>Zn(2+)</name>
        <dbReference type="ChEBI" id="CHEBI:29105"/>
    </ligand>
</feature>
<feature type="binding site" evidence="2">
    <location>
        <position position="19"/>
    </location>
    <ligand>
        <name>Zn(2+)</name>
        <dbReference type="ChEBI" id="CHEBI:29105"/>
    </ligand>
</feature>
<feature type="binding site" evidence="2">
    <location>
        <position position="38"/>
    </location>
    <ligand>
        <name>Zn(2+)</name>
        <dbReference type="ChEBI" id="CHEBI:29105"/>
    </ligand>
</feature>
<feature type="binding site" evidence="2">
    <location>
        <position position="41"/>
    </location>
    <ligand>
        <name>Zn(2+)</name>
        <dbReference type="ChEBI" id="CHEBI:29105"/>
    </ligand>
</feature>
<feature type="binding site" evidence="1">
    <location>
        <begin position="121"/>
        <end position="128"/>
    </location>
    <ligand>
        <name>ATP</name>
        <dbReference type="ChEBI" id="CHEBI:30616"/>
    </ligand>
</feature>
<organism>
    <name type="scientific">Pseudomonas paraeruginosa (strain DSM 24068 / PA7)</name>
    <name type="common">Pseudomonas aeruginosa (strain PA7)</name>
    <dbReference type="NCBI Taxonomy" id="381754"/>
    <lineage>
        <taxon>Bacteria</taxon>
        <taxon>Pseudomonadati</taxon>
        <taxon>Pseudomonadota</taxon>
        <taxon>Gammaproteobacteria</taxon>
        <taxon>Pseudomonadales</taxon>
        <taxon>Pseudomonadaceae</taxon>
        <taxon>Pseudomonas</taxon>
        <taxon>Pseudomonas paraeruginosa</taxon>
    </lineage>
</organism>
<protein>
    <recommendedName>
        <fullName evidence="1">ATP-dependent Clp protease ATP-binding subunit ClpX</fullName>
    </recommendedName>
</protein>
<keyword id="KW-0067">ATP-binding</keyword>
<keyword id="KW-0143">Chaperone</keyword>
<keyword id="KW-0479">Metal-binding</keyword>
<keyword id="KW-0547">Nucleotide-binding</keyword>
<keyword id="KW-0862">Zinc</keyword>
<evidence type="ECO:0000255" key="1">
    <source>
        <dbReference type="HAMAP-Rule" id="MF_00175"/>
    </source>
</evidence>
<evidence type="ECO:0000255" key="2">
    <source>
        <dbReference type="PROSITE-ProRule" id="PRU01250"/>
    </source>
</evidence>
<dbReference type="EMBL" id="CP000744">
    <property type="protein sequence ID" value="ABR84632.1"/>
    <property type="molecule type" value="Genomic_DNA"/>
</dbReference>
<dbReference type="RefSeq" id="WP_003087924.1">
    <property type="nucleotide sequence ID" value="NC_009656.1"/>
</dbReference>
<dbReference type="SMR" id="A6V718"/>
<dbReference type="GeneID" id="77221608"/>
<dbReference type="KEGG" id="pap:PSPA7_3495"/>
<dbReference type="HOGENOM" id="CLU_014218_8_2_6"/>
<dbReference type="Proteomes" id="UP000001582">
    <property type="component" value="Chromosome"/>
</dbReference>
<dbReference type="GO" id="GO:0009376">
    <property type="term" value="C:HslUV protease complex"/>
    <property type="evidence" value="ECO:0007669"/>
    <property type="project" value="TreeGrafter"/>
</dbReference>
<dbReference type="GO" id="GO:0005524">
    <property type="term" value="F:ATP binding"/>
    <property type="evidence" value="ECO:0007669"/>
    <property type="project" value="UniProtKB-UniRule"/>
</dbReference>
<dbReference type="GO" id="GO:0016887">
    <property type="term" value="F:ATP hydrolysis activity"/>
    <property type="evidence" value="ECO:0007669"/>
    <property type="project" value="InterPro"/>
</dbReference>
<dbReference type="GO" id="GO:0140662">
    <property type="term" value="F:ATP-dependent protein folding chaperone"/>
    <property type="evidence" value="ECO:0007669"/>
    <property type="project" value="InterPro"/>
</dbReference>
<dbReference type="GO" id="GO:0046983">
    <property type="term" value="F:protein dimerization activity"/>
    <property type="evidence" value="ECO:0007669"/>
    <property type="project" value="InterPro"/>
</dbReference>
<dbReference type="GO" id="GO:0051082">
    <property type="term" value="F:unfolded protein binding"/>
    <property type="evidence" value="ECO:0007669"/>
    <property type="project" value="UniProtKB-UniRule"/>
</dbReference>
<dbReference type="GO" id="GO:0008270">
    <property type="term" value="F:zinc ion binding"/>
    <property type="evidence" value="ECO:0007669"/>
    <property type="project" value="InterPro"/>
</dbReference>
<dbReference type="GO" id="GO:0051301">
    <property type="term" value="P:cell division"/>
    <property type="evidence" value="ECO:0007669"/>
    <property type="project" value="TreeGrafter"/>
</dbReference>
<dbReference type="GO" id="GO:0051603">
    <property type="term" value="P:proteolysis involved in protein catabolic process"/>
    <property type="evidence" value="ECO:0007669"/>
    <property type="project" value="TreeGrafter"/>
</dbReference>
<dbReference type="CDD" id="cd19497">
    <property type="entry name" value="RecA-like_ClpX"/>
    <property type="match status" value="1"/>
</dbReference>
<dbReference type="FunFam" id="1.10.8.60:FF:000002">
    <property type="entry name" value="ATP-dependent Clp protease ATP-binding subunit ClpX"/>
    <property type="match status" value="1"/>
</dbReference>
<dbReference type="FunFam" id="3.40.50.300:FF:000005">
    <property type="entry name" value="ATP-dependent Clp protease ATP-binding subunit ClpX"/>
    <property type="match status" value="1"/>
</dbReference>
<dbReference type="Gene3D" id="1.10.8.60">
    <property type="match status" value="1"/>
</dbReference>
<dbReference type="Gene3D" id="6.20.220.10">
    <property type="entry name" value="ClpX chaperone, C4-type zinc finger domain"/>
    <property type="match status" value="1"/>
</dbReference>
<dbReference type="Gene3D" id="3.40.50.300">
    <property type="entry name" value="P-loop containing nucleotide triphosphate hydrolases"/>
    <property type="match status" value="1"/>
</dbReference>
<dbReference type="HAMAP" id="MF_00175">
    <property type="entry name" value="ClpX"/>
    <property type="match status" value="1"/>
</dbReference>
<dbReference type="InterPro" id="IPR003593">
    <property type="entry name" value="AAA+_ATPase"/>
</dbReference>
<dbReference type="InterPro" id="IPR050052">
    <property type="entry name" value="ATP-dep_Clp_protease_ClpX"/>
</dbReference>
<dbReference type="InterPro" id="IPR003959">
    <property type="entry name" value="ATPase_AAA_core"/>
</dbReference>
<dbReference type="InterPro" id="IPR019489">
    <property type="entry name" value="Clp_ATPase_C"/>
</dbReference>
<dbReference type="InterPro" id="IPR004487">
    <property type="entry name" value="Clp_protease_ATP-bd_su_ClpX"/>
</dbReference>
<dbReference type="InterPro" id="IPR046425">
    <property type="entry name" value="ClpX_bact"/>
</dbReference>
<dbReference type="InterPro" id="IPR027417">
    <property type="entry name" value="P-loop_NTPase"/>
</dbReference>
<dbReference type="InterPro" id="IPR010603">
    <property type="entry name" value="Znf_CppX_C4"/>
</dbReference>
<dbReference type="InterPro" id="IPR038366">
    <property type="entry name" value="Znf_CppX_C4_sf"/>
</dbReference>
<dbReference type="NCBIfam" id="TIGR00382">
    <property type="entry name" value="clpX"/>
    <property type="match status" value="1"/>
</dbReference>
<dbReference type="NCBIfam" id="NF003745">
    <property type="entry name" value="PRK05342.1"/>
    <property type="match status" value="1"/>
</dbReference>
<dbReference type="PANTHER" id="PTHR48102:SF7">
    <property type="entry name" value="ATP-DEPENDENT CLP PROTEASE ATP-BINDING SUBUNIT CLPX-LIKE, MITOCHONDRIAL"/>
    <property type="match status" value="1"/>
</dbReference>
<dbReference type="PANTHER" id="PTHR48102">
    <property type="entry name" value="ATP-DEPENDENT CLP PROTEASE ATP-BINDING SUBUNIT CLPX-LIKE, MITOCHONDRIAL-RELATED"/>
    <property type="match status" value="1"/>
</dbReference>
<dbReference type="Pfam" id="PF07724">
    <property type="entry name" value="AAA_2"/>
    <property type="match status" value="1"/>
</dbReference>
<dbReference type="Pfam" id="PF10431">
    <property type="entry name" value="ClpB_D2-small"/>
    <property type="match status" value="1"/>
</dbReference>
<dbReference type="Pfam" id="PF06689">
    <property type="entry name" value="zf-C4_ClpX"/>
    <property type="match status" value="1"/>
</dbReference>
<dbReference type="SMART" id="SM00382">
    <property type="entry name" value="AAA"/>
    <property type="match status" value="1"/>
</dbReference>
<dbReference type="SMART" id="SM01086">
    <property type="entry name" value="ClpB_D2-small"/>
    <property type="match status" value="1"/>
</dbReference>
<dbReference type="SMART" id="SM00994">
    <property type="entry name" value="zf-C4_ClpX"/>
    <property type="match status" value="1"/>
</dbReference>
<dbReference type="SUPFAM" id="SSF57716">
    <property type="entry name" value="Glucocorticoid receptor-like (DNA-binding domain)"/>
    <property type="match status" value="1"/>
</dbReference>
<dbReference type="SUPFAM" id="SSF52540">
    <property type="entry name" value="P-loop containing nucleoside triphosphate hydrolases"/>
    <property type="match status" value="1"/>
</dbReference>
<dbReference type="PROSITE" id="PS51902">
    <property type="entry name" value="CLPX_ZB"/>
    <property type="match status" value="1"/>
</dbReference>
<name>CLPX_PSEP7</name>